<organism>
    <name type="scientific">Mus musculus</name>
    <name type="common">Mouse</name>
    <dbReference type="NCBI Taxonomy" id="10090"/>
    <lineage>
        <taxon>Eukaryota</taxon>
        <taxon>Metazoa</taxon>
        <taxon>Chordata</taxon>
        <taxon>Craniata</taxon>
        <taxon>Vertebrata</taxon>
        <taxon>Euteleostomi</taxon>
        <taxon>Mammalia</taxon>
        <taxon>Eutheria</taxon>
        <taxon>Euarchontoglires</taxon>
        <taxon>Glires</taxon>
        <taxon>Rodentia</taxon>
        <taxon>Myomorpha</taxon>
        <taxon>Muroidea</taxon>
        <taxon>Muridae</taxon>
        <taxon>Murinae</taxon>
        <taxon>Mus</taxon>
        <taxon>Mus</taxon>
    </lineage>
</organism>
<gene>
    <name evidence="5 7" type="primary">Sfxn4</name>
</gene>
<protein>
    <recommendedName>
        <fullName evidence="5">Sideroflexin-4</fullName>
    </recommendedName>
</protein>
<reference key="1">
    <citation type="journal article" date="2001" name="Genes Dev.">
        <title>A mutation in a mitochondrial transmembrane protein is responsible for the pleiotropic hematological and skeletal phenotype of flexed-tail (f/f) mice.</title>
        <authorList>
            <person name="Fleming M.D."/>
            <person name="Campagna D.R."/>
            <person name="Haslett J.N."/>
            <person name="Trenor C.C. III"/>
            <person name="Andrews N.C."/>
        </authorList>
    </citation>
    <scope>NUCLEOTIDE SEQUENCE [MRNA]</scope>
    <scope>TISSUE SPECIFICITY</scope>
</reference>
<reference key="2">
    <citation type="journal article" date="2009" name="PLoS Biol.">
        <title>Lineage-specific biology revealed by a finished genome assembly of the mouse.</title>
        <authorList>
            <person name="Church D.M."/>
            <person name="Goodstadt L."/>
            <person name="Hillier L.W."/>
            <person name="Zody M.C."/>
            <person name="Goldstein S."/>
            <person name="She X."/>
            <person name="Bult C.J."/>
            <person name="Agarwala R."/>
            <person name="Cherry J.L."/>
            <person name="DiCuccio M."/>
            <person name="Hlavina W."/>
            <person name="Kapustin Y."/>
            <person name="Meric P."/>
            <person name="Maglott D."/>
            <person name="Birtle Z."/>
            <person name="Marques A.C."/>
            <person name="Graves T."/>
            <person name="Zhou S."/>
            <person name="Teague B."/>
            <person name="Potamousis K."/>
            <person name="Churas C."/>
            <person name="Place M."/>
            <person name="Herschleb J."/>
            <person name="Runnheim R."/>
            <person name="Forrest D."/>
            <person name="Amos-Landgraf J."/>
            <person name="Schwartz D.C."/>
            <person name="Cheng Z."/>
            <person name="Lindblad-Toh K."/>
            <person name="Eichler E.E."/>
            <person name="Ponting C.P."/>
        </authorList>
    </citation>
    <scope>NUCLEOTIDE SEQUENCE [LARGE SCALE GENOMIC DNA]</scope>
    <source>
        <strain>C57BL/6J</strain>
    </source>
</reference>
<reference key="3">
    <citation type="journal article" date="2004" name="Genome Res.">
        <title>The status, quality, and expansion of the NIH full-length cDNA project: the Mammalian Gene Collection (MGC).</title>
        <authorList>
            <consortium name="The MGC Project Team"/>
        </authorList>
    </citation>
    <scope>NUCLEOTIDE SEQUENCE [LARGE SCALE MRNA]</scope>
    <source>
        <tissue>Brain</tissue>
    </source>
</reference>
<keyword id="KW-0007">Acetylation</keyword>
<keyword id="KW-0029">Amino-acid transport</keyword>
<keyword id="KW-0472">Membrane</keyword>
<keyword id="KW-0496">Mitochondrion</keyword>
<keyword id="KW-0999">Mitochondrion inner membrane</keyword>
<keyword id="KW-1185">Reference proteome</keyword>
<keyword id="KW-0812">Transmembrane</keyword>
<keyword id="KW-1133">Transmembrane helix</keyword>
<keyword id="KW-0813">Transport</keyword>
<comment type="function">
    <text evidence="1 2">Mitochondrial amino-acid transporter (By similarity). Does not act as a serine transporter: not able to mediate transport of serine into mitochondria (By similarity).</text>
</comment>
<comment type="subcellular location">
    <subcellularLocation>
        <location evidence="1">Mitochondrion inner membrane</location>
        <topology evidence="3">Multi-pass membrane protein</topology>
    </subcellularLocation>
</comment>
<comment type="tissue specificity">
    <text evidence="4">Largely restricted to kidney, brain and heart.</text>
</comment>
<comment type="similarity">
    <text evidence="6">Belongs to the sideroflexin family.</text>
</comment>
<evidence type="ECO:0000250" key="1">
    <source>
        <dbReference type="UniProtKB" id="Q6P4A7"/>
    </source>
</evidence>
<evidence type="ECO:0000250" key="2">
    <source>
        <dbReference type="UniProtKB" id="Q9H9B4"/>
    </source>
</evidence>
<evidence type="ECO:0000255" key="3"/>
<evidence type="ECO:0000269" key="4">
    <source>
    </source>
</evidence>
<evidence type="ECO:0000303" key="5">
    <source>
    </source>
</evidence>
<evidence type="ECO:0000305" key="6"/>
<evidence type="ECO:0000312" key="7">
    <source>
        <dbReference type="MGI" id="MGI:2137680"/>
    </source>
</evidence>
<dbReference type="EMBL" id="AF325263">
    <property type="protein sequence ID" value="AAK39431.1"/>
    <property type="molecule type" value="mRNA"/>
</dbReference>
<dbReference type="EMBL" id="AC102432">
    <property type="status" value="NOT_ANNOTATED_CDS"/>
    <property type="molecule type" value="Genomic_DNA"/>
</dbReference>
<dbReference type="EMBL" id="AC163019">
    <property type="status" value="NOT_ANNOTATED_CDS"/>
    <property type="molecule type" value="Genomic_DNA"/>
</dbReference>
<dbReference type="EMBL" id="BC089535">
    <property type="protein sequence ID" value="AAH89535.1"/>
    <property type="molecule type" value="mRNA"/>
</dbReference>
<dbReference type="CCDS" id="CCDS29943.1"/>
<dbReference type="RefSeq" id="NP_444428.3">
    <property type="nucleotide sequence ID" value="NM_053198.4"/>
</dbReference>
<dbReference type="FunCoup" id="Q925N1">
    <property type="interactions" value="1853"/>
</dbReference>
<dbReference type="STRING" id="10090.ENSMUSP00000118743"/>
<dbReference type="iPTMnet" id="Q925N1"/>
<dbReference type="PhosphoSitePlus" id="Q925N1"/>
<dbReference type="PaxDb" id="10090-ENSMUSP00000118743"/>
<dbReference type="ProteomicsDB" id="261201"/>
<dbReference type="Pumba" id="Q925N1"/>
<dbReference type="Antibodypedia" id="18795">
    <property type="antibodies" value="113 antibodies from 21 providers"/>
</dbReference>
<dbReference type="DNASU" id="94281"/>
<dbReference type="Ensembl" id="ENSMUST00000135808.8">
    <property type="protein sequence ID" value="ENSMUSP00000118743.2"/>
    <property type="gene ID" value="ENSMUSG00000063698.10"/>
</dbReference>
<dbReference type="GeneID" id="94281"/>
<dbReference type="KEGG" id="mmu:94281"/>
<dbReference type="UCSC" id="uc008icc.2">
    <property type="organism name" value="mouse"/>
</dbReference>
<dbReference type="AGR" id="MGI:2137680"/>
<dbReference type="CTD" id="119559"/>
<dbReference type="MGI" id="MGI:2137680">
    <property type="gene designation" value="Sfxn4"/>
</dbReference>
<dbReference type="VEuPathDB" id="HostDB:ENSMUSG00000063698"/>
<dbReference type="eggNOG" id="KOG3767">
    <property type="taxonomic scope" value="Eukaryota"/>
</dbReference>
<dbReference type="GeneTree" id="ENSGT01030000234641"/>
<dbReference type="HOGENOM" id="CLU_039425_3_0_1"/>
<dbReference type="InParanoid" id="Q925N1"/>
<dbReference type="OMA" id="NVRFWIA"/>
<dbReference type="OrthoDB" id="6608471at2759"/>
<dbReference type="PhylomeDB" id="Q925N1"/>
<dbReference type="TreeFam" id="TF313205"/>
<dbReference type="BioGRID-ORCS" id="94281">
    <property type="hits" value="1 hit in 76 CRISPR screens"/>
</dbReference>
<dbReference type="ChiTaRS" id="Sfxn4">
    <property type="organism name" value="mouse"/>
</dbReference>
<dbReference type="PRO" id="PR:Q925N1"/>
<dbReference type="Proteomes" id="UP000000589">
    <property type="component" value="Chromosome 19"/>
</dbReference>
<dbReference type="RNAct" id="Q925N1">
    <property type="molecule type" value="protein"/>
</dbReference>
<dbReference type="Bgee" id="ENSMUSG00000063698">
    <property type="expression patterns" value="Expressed in CA1 field of hippocampus and 198 other cell types or tissues"/>
</dbReference>
<dbReference type="ExpressionAtlas" id="Q925N1">
    <property type="expression patterns" value="baseline and differential"/>
</dbReference>
<dbReference type="GO" id="GO:0005743">
    <property type="term" value="C:mitochondrial inner membrane"/>
    <property type="evidence" value="ECO:0007669"/>
    <property type="project" value="UniProtKB-SubCell"/>
</dbReference>
<dbReference type="GO" id="GO:0005739">
    <property type="term" value="C:mitochondrion"/>
    <property type="evidence" value="ECO:0007005"/>
    <property type="project" value="MGI"/>
</dbReference>
<dbReference type="GO" id="GO:0005654">
    <property type="term" value="C:nucleoplasm"/>
    <property type="evidence" value="ECO:0007669"/>
    <property type="project" value="Ensembl"/>
</dbReference>
<dbReference type="GO" id="GO:0015075">
    <property type="term" value="F:monoatomic ion transmembrane transporter activity"/>
    <property type="evidence" value="ECO:0007669"/>
    <property type="project" value="InterPro"/>
</dbReference>
<dbReference type="GO" id="GO:0006865">
    <property type="term" value="P:amino acid transport"/>
    <property type="evidence" value="ECO:0007669"/>
    <property type="project" value="UniProtKB-KW"/>
</dbReference>
<dbReference type="InterPro" id="IPR004686">
    <property type="entry name" value="Mtc"/>
</dbReference>
<dbReference type="PANTHER" id="PTHR11153">
    <property type="entry name" value="SIDEROFLEXIN"/>
    <property type="match status" value="1"/>
</dbReference>
<dbReference type="PANTHER" id="PTHR11153:SF3">
    <property type="entry name" value="SIDEROFLEXIN-4"/>
    <property type="match status" value="1"/>
</dbReference>
<dbReference type="Pfam" id="PF03820">
    <property type="entry name" value="SFXNs"/>
    <property type="match status" value="1"/>
</dbReference>
<proteinExistence type="evidence at transcript level"/>
<accession>Q925N1</accession>
<accession>E9QKN7</accession>
<accession>Q5FW99</accession>
<sequence length="313" mass="35580">MEPNLQFWISERQAFFRRFCQWMDLLDPVNMFISIGSIEKSRQLLFTTEDAPKHYLDNQVIKDAWNKSLSTVHPDSSKLIPHLFRPAAFLPVTAPMVFLLMMPDTGIKSIILTQGCLYGYTTAFNITNGNASYSHGPVERTLLGAGVSVSSTFIGLIPHLFQMKYPPNNFWLKRTLPIVFLAQVSGMNVFASRSFENHRGIEVMDKEGHVVGHSRKAGRKAIKDTAKSRAVLFGTSALAPELFIHIFKRTRFYPQTLLSLVILRMSSTFFMMGLMVPVSFSMFPQIGQIQCSQLEEKIQSSTEEKELFYYRGV</sequence>
<name>SFXN4_MOUSE</name>
<feature type="chain" id="PRO_0000177042" description="Sideroflexin-4">
    <location>
        <begin position="1"/>
        <end position="313"/>
    </location>
</feature>
<feature type="transmembrane region" description="Helical" evidence="3">
    <location>
        <begin position="87"/>
        <end position="107"/>
    </location>
</feature>
<feature type="transmembrane region" description="Helical" evidence="3">
    <location>
        <begin position="141"/>
        <end position="161"/>
    </location>
</feature>
<feature type="transmembrane region" description="Helical" evidence="3">
    <location>
        <begin position="175"/>
        <end position="191"/>
    </location>
</feature>
<feature type="transmembrane region" description="Helical" evidence="3">
    <location>
        <begin position="230"/>
        <end position="247"/>
    </location>
</feature>
<feature type="transmembrane region" description="Helical" evidence="3">
    <location>
        <begin position="269"/>
        <end position="289"/>
    </location>
</feature>
<feature type="modified residue" description="N6-acetyllysine" evidence="1">
    <location>
        <position position="173"/>
    </location>
</feature>
<feature type="sequence conflict" description="In Ref. 1; AAK39431." evidence="6" ref="1">
    <original>G</original>
    <variation>S</variation>
    <location>
        <position position="115"/>
    </location>
</feature>
<feature type="sequence conflict" description="In Ref. 1; AAK39431." evidence="6" ref="1">
    <original>S</original>
    <variation>F</variation>
    <location>
        <position position="148"/>
    </location>
</feature>
<feature type="sequence conflict" description="In Ref. 1; AAK39431." evidence="6" ref="1">
    <original>P</original>
    <variation>L</variation>
    <location>
        <position position="167"/>
    </location>
</feature>
<feature type="sequence conflict" description="In Ref. 3; AAH89535." evidence="6" ref="3">
    <original>P</original>
    <variation>S</variation>
    <location>
        <position position="177"/>
    </location>
</feature>
<feature type="sequence conflict" description="In Ref. 3; AAH89535." evidence="6" ref="3">
    <original>S</original>
    <variation>G</variation>
    <location>
        <position position="194"/>
    </location>
</feature>